<protein>
    <recommendedName>
        <fullName>Flagellar biosynthetic protein FliR</fullName>
    </recommendedName>
</protein>
<organism>
    <name type="scientific">Buchnera aphidicola subsp. Baizongia pistaciae (strain Bp)</name>
    <dbReference type="NCBI Taxonomy" id="224915"/>
    <lineage>
        <taxon>Bacteria</taxon>
        <taxon>Pseudomonadati</taxon>
        <taxon>Pseudomonadota</taxon>
        <taxon>Gammaproteobacteria</taxon>
        <taxon>Enterobacterales</taxon>
        <taxon>Erwiniaceae</taxon>
        <taxon>Buchnera</taxon>
    </lineage>
</organism>
<proteinExistence type="inferred from homology"/>
<sequence length="257" mass="29536">MFQFNFNDFILFIYNLFFPAVRILALFSTAPLFNSKFIEKKIKLIMAFVISWIFSSFLPKVNIAIFSVDGILIIIEQMLIGILLGLTMQLIFSSIFMSGEIISLQMGLSFSSLFDFNSRSNLSALSHFVHIFLLLLFLEWNGHIWMLSALFDTFITIPIQKIYLDPNIFLKVVNFSKYIFFDSIMLLFPIIIVQLLLNLSIGILNRVAPQISILSLGFTVTLLVGIILLYFFIPIFPSSCIVIFRRLQSFVLTLFNS</sequence>
<accession>Q89AZ0</accession>
<evidence type="ECO:0000250" key="1"/>
<evidence type="ECO:0000255" key="2"/>
<evidence type="ECO:0000305" key="3"/>
<feature type="chain" id="PRO_0000192053" description="Flagellar biosynthetic protein FliR">
    <location>
        <begin position="1"/>
        <end position="257"/>
    </location>
</feature>
<feature type="transmembrane region" description="Helical" evidence="2">
    <location>
        <begin position="12"/>
        <end position="34"/>
    </location>
</feature>
<feature type="transmembrane region" description="Helical" evidence="2">
    <location>
        <begin position="44"/>
        <end position="66"/>
    </location>
</feature>
<feature type="transmembrane region" description="Helical" evidence="2">
    <location>
        <begin position="79"/>
        <end position="101"/>
    </location>
</feature>
<feature type="transmembrane region" description="Helical" evidence="2">
    <location>
        <begin position="121"/>
        <end position="138"/>
    </location>
</feature>
<feature type="transmembrane region" description="Helical" evidence="2">
    <location>
        <begin position="145"/>
        <end position="164"/>
    </location>
</feature>
<feature type="transmembrane region" description="Helical" evidence="2">
    <location>
        <begin position="179"/>
        <end position="201"/>
    </location>
</feature>
<feature type="transmembrane region" description="Helical" evidence="2">
    <location>
        <begin position="214"/>
        <end position="236"/>
    </location>
</feature>
<gene>
    <name type="primary">fliR</name>
    <name type="ordered locus">bbp_078</name>
</gene>
<keyword id="KW-0975">Bacterial flagellum</keyword>
<keyword id="KW-1003">Cell membrane</keyword>
<keyword id="KW-0472">Membrane</keyword>
<keyword id="KW-1185">Reference proteome</keyword>
<keyword id="KW-0812">Transmembrane</keyword>
<keyword id="KW-1133">Transmembrane helix</keyword>
<comment type="function">
    <text evidence="1">Role in flagellar biosynthesis.</text>
</comment>
<comment type="subcellular location">
    <subcellularLocation>
        <location evidence="3">Cell membrane</location>
        <topology evidence="3">Multi-pass membrane protein</topology>
    </subcellularLocation>
    <subcellularLocation>
        <location evidence="1">Bacterial flagellum basal body</location>
    </subcellularLocation>
</comment>
<comment type="similarity">
    <text evidence="3">Belongs to the FliR/MopE/SpaR family.</text>
</comment>
<dbReference type="EMBL" id="AE016826">
    <property type="protein sequence ID" value="AAO26814.1"/>
    <property type="molecule type" value="Genomic_DNA"/>
</dbReference>
<dbReference type="RefSeq" id="WP_011091215.1">
    <property type="nucleotide sequence ID" value="NC_004545.1"/>
</dbReference>
<dbReference type="SMR" id="Q89AZ0"/>
<dbReference type="STRING" id="224915.bbp_078"/>
<dbReference type="KEGG" id="bab:bbp_078"/>
<dbReference type="eggNOG" id="COG1684">
    <property type="taxonomic scope" value="Bacteria"/>
</dbReference>
<dbReference type="HOGENOM" id="CLU_063626_4_1_6"/>
<dbReference type="OrthoDB" id="9797790at2"/>
<dbReference type="Proteomes" id="UP000000601">
    <property type="component" value="Chromosome"/>
</dbReference>
<dbReference type="GO" id="GO:0009425">
    <property type="term" value="C:bacterial-type flagellum basal body"/>
    <property type="evidence" value="ECO:0007669"/>
    <property type="project" value="UniProtKB-SubCell"/>
</dbReference>
<dbReference type="GO" id="GO:0005886">
    <property type="term" value="C:plasma membrane"/>
    <property type="evidence" value="ECO:0007669"/>
    <property type="project" value="UniProtKB-SubCell"/>
</dbReference>
<dbReference type="GO" id="GO:0044780">
    <property type="term" value="P:bacterial-type flagellum assembly"/>
    <property type="evidence" value="ECO:0007669"/>
    <property type="project" value="InterPro"/>
</dbReference>
<dbReference type="GO" id="GO:0006605">
    <property type="term" value="P:protein targeting"/>
    <property type="evidence" value="ECO:0007669"/>
    <property type="project" value="InterPro"/>
</dbReference>
<dbReference type="InterPro" id="IPR006303">
    <property type="entry name" value="FliR"/>
</dbReference>
<dbReference type="InterPro" id="IPR002010">
    <property type="entry name" value="T3SS_IM_R"/>
</dbReference>
<dbReference type="NCBIfam" id="TIGR01400">
    <property type="entry name" value="fliR"/>
    <property type="match status" value="1"/>
</dbReference>
<dbReference type="PANTHER" id="PTHR30065">
    <property type="entry name" value="FLAGELLAR BIOSYNTHETIC PROTEIN FLIR"/>
    <property type="match status" value="1"/>
</dbReference>
<dbReference type="PANTHER" id="PTHR30065:SF8">
    <property type="entry name" value="FLAGELLAR BIOSYNTHETIC PROTEIN FLIR"/>
    <property type="match status" value="1"/>
</dbReference>
<dbReference type="Pfam" id="PF01311">
    <property type="entry name" value="Bac_export_1"/>
    <property type="match status" value="1"/>
</dbReference>
<dbReference type="PRINTS" id="PR00953">
    <property type="entry name" value="TYPE3IMRPROT"/>
</dbReference>
<name>FLIR_BUCBP</name>
<reference key="1">
    <citation type="journal article" date="2003" name="Proc. Natl. Acad. Sci. U.S.A.">
        <title>Reductive genome evolution in Buchnera aphidicola.</title>
        <authorList>
            <person name="van Ham R.C.H.J."/>
            <person name="Kamerbeek J."/>
            <person name="Palacios C."/>
            <person name="Rausell C."/>
            <person name="Abascal F."/>
            <person name="Bastolla U."/>
            <person name="Fernandez J.M."/>
            <person name="Jimenez L."/>
            <person name="Postigo M."/>
            <person name="Silva F.J."/>
            <person name="Tamames J."/>
            <person name="Viguera E."/>
            <person name="Latorre A."/>
            <person name="Valencia A."/>
            <person name="Moran F."/>
            <person name="Moya A."/>
        </authorList>
    </citation>
    <scope>NUCLEOTIDE SEQUENCE [LARGE SCALE GENOMIC DNA]</scope>
    <source>
        <strain>Bp</strain>
    </source>
</reference>